<name>US10_EHV1V</name>
<proteinExistence type="evidence at transcript level"/>
<evidence type="ECO:0000250" key="1"/>
<evidence type="ECO:0000255" key="2"/>
<evidence type="ECO:0000256" key="3">
    <source>
        <dbReference type="SAM" id="MobiDB-lite"/>
    </source>
</evidence>
<evidence type="ECO:0000305" key="4"/>
<evidence type="ECO:0000312" key="5">
    <source>
        <dbReference type="EMBL" id="AAS45953.1"/>
    </source>
</evidence>
<dbReference type="EMBL" id="AY464052">
    <property type="protein sequence ID" value="AAS45953.1"/>
    <property type="molecule type" value="Genomic_DNA"/>
</dbReference>
<dbReference type="EMBL" id="AY464052">
    <property type="protein sequence ID" value="AAS45952.1"/>
    <property type="molecule type" value="Genomic_DNA"/>
</dbReference>
<dbReference type="KEGG" id="vg:2948572"/>
<dbReference type="KEGG" id="vg:2948575"/>
<dbReference type="Proteomes" id="UP000008296">
    <property type="component" value="Segment"/>
</dbReference>
<dbReference type="GO" id="GO:0044204">
    <property type="term" value="C:host cell nuclear matrix"/>
    <property type="evidence" value="ECO:0007669"/>
    <property type="project" value="UniProtKB-SubCell"/>
</dbReference>
<dbReference type="GO" id="GO:0019033">
    <property type="term" value="C:viral tegument"/>
    <property type="evidence" value="ECO:0007669"/>
    <property type="project" value="UniProtKB-SubCell"/>
</dbReference>
<dbReference type="GO" id="GO:0008270">
    <property type="term" value="F:zinc ion binding"/>
    <property type="evidence" value="ECO:0007669"/>
    <property type="project" value="UniProtKB-KW"/>
</dbReference>
<dbReference type="InterPro" id="IPR000714">
    <property type="entry name" value="EHV_Unk"/>
</dbReference>
<dbReference type="Pfam" id="PF02053">
    <property type="entry name" value="Gene66"/>
    <property type="match status" value="1"/>
</dbReference>
<dbReference type="PRINTS" id="PR00957">
    <property type="entry name" value="GENE66"/>
</dbReference>
<comment type="subcellular location">
    <subcellularLocation>
        <location evidence="1">Virion tegument</location>
    </subcellularLocation>
    <subcellularLocation>
        <location evidence="1">Host nucleus matrix</location>
    </subcellularLocation>
</comment>
<comment type="induction">
    <text>Expressed late in the infection cycle.</text>
</comment>
<comment type="PTM">
    <text evidence="1">Phosphorylated.</text>
</comment>
<comment type="similarity">
    <text evidence="4">Belongs to the herpesviridae US10 family.</text>
</comment>
<protein>
    <recommendedName>
        <fullName>Virion protein US10 homolog</fullName>
    </recommendedName>
    <alternativeName>
        <fullName>Gene 66 protein</fullName>
    </alternativeName>
</protein>
<organism>
    <name type="scientific">Equine herpesvirus 1 (strain V592)</name>
    <name type="common">EHV-1</name>
    <name type="synonym">Equine abortion virus</name>
    <dbReference type="NCBI Taxonomy" id="310273"/>
    <lineage>
        <taxon>Viruses</taxon>
        <taxon>Duplodnaviria</taxon>
        <taxon>Heunggongvirae</taxon>
        <taxon>Peploviricota</taxon>
        <taxon>Herviviricetes</taxon>
        <taxon>Herpesvirales</taxon>
        <taxon>Orthoherpesviridae</taxon>
        <taxon>Alphaherpesvirinae</taxon>
        <taxon>Varicellovirus</taxon>
        <taxon>Varicellovirus equidalpha1</taxon>
        <taxon>Equid alphaherpesvirus 1</taxon>
    </lineage>
</organism>
<sequence>MDGAYGHVHNGSPMAVDGEESGAGTGTGAGADGLYPTSTDTAAHAVSLPRSVGDFAAVVRAVSAEAADALRSGAGPPAEAWPRVYRMFCDMFGRYAASPMPVFHSADPLRRAVGRYLVDLGAAPVETHAELSGRMLFCAYWCCLGHAFACSRPQMYERACARFFETRLGIGETPPADAERYWAALLNMAGAEPELFPRHAAAAAYLRARGRKLPLQLPSAHRTAKTVAVTGQSINF</sequence>
<feature type="chain" id="PRO_0000116150" description="Virion protein US10 homolog">
    <location>
        <begin position="1"/>
        <end position="236"/>
    </location>
</feature>
<feature type="zinc finger region" evidence="2">
    <location>
        <begin position="138"/>
        <end position="150"/>
    </location>
</feature>
<feature type="region of interest" description="Disordered" evidence="3">
    <location>
        <begin position="1"/>
        <end position="32"/>
    </location>
</feature>
<feature type="compositionally biased region" description="Gly residues" evidence="3">
    <location>
        <begin position="21"/>
        <end position="31"/>
    </location>
</feature>
<organismHost>
    <name type="scientific">Equus caballus</name>
    <name type="common">Horse</name>
    <dbReference type="NCBI Taxonomy" id="9796"/>
</organismHost>
<reference evidence="4 5" key="1">
    <citation type="submission" date="2003-11" db="EMBL/GenBank/DDBJ databases">
        <authorList>
            <person name="Davis-Poynter N."/>
            <person name="Nugent J."/>
            <person name="Birch-Machin I."/>
            <person name="Allen G.P."/>
        </authorList>
    </citation>
    <scope>NUCLEOTIDE SEQUENCE [LARGE SCALE GENOMIC DNA]</scope>
</reference>
<keyword id="KW-1048">Host nucleus</keyword>
<keyword id="KW-0426">Late protein</keyword>
<keyword id="KW-0479">Metal-binding</keyword>
<keyword id="KW-0946">Virion</keyword>
<keyword id="KW-0920">Virion tegument</keyword>
<keyword id="KW-0862">Zinc</keyword>
<keyword id="KW-0863">Zinc-finger</keyword>
<accession>P84402</accession>
<accession>Q6S6V3</accession>
<gene>
    <name type="ordered locus">66</name>
</gene>